<reference key="1">
    <citation type="journal article" date="2000" name="Nature">
        <title>Complete genome sequence of Pseudomonas aeruginosa PAO1, an opportunistic pathogen.</title>
        <authorList>
            <person name="Stover C.K."/>
            <person name="Pham X.-Q.T."/>
            <person name="Erwin A.L."/>
            <person name="Mizoguchi S.D."/>
            <person name="Warrener P."/>
            <person name="Hickey M.J."/>
            <person name="Brinkman F.S.L."/>
            <person name="Hufnagle W.O."/>
            <person name="Kowalik D.J."/>
            <person name="Lagrou M."/>
            <person name="Garber R.L."/>
            <person name="Goltry L."/>
            <person name="Tolentino E."/>
            <person name="Westbrock-Wadman S."/>
            <person name="Yuan Y."/>
            <person name="Brody L.L."/>
            <person name="Coulter S.N."/>
            <person name="Folger K.R."/>
            <person name="Kas A."/>
            <person name="Larbig K."/>
            <person name="Lim R.M."/>
            <person name="Smith K.A."/>
            <person name="Spencer D.H."/>
            <person name="Wong G.K.-S."/>
            <person name="Wu Z."/>
            <person name="Paulsen I.T."/>
            <person name="Reizer J."/>
            <person name="Saier M.H. Jr."/>
            <person name="Hancock R.E.W."/>
            <person name="Lory S."/>
            <person name="Olson M.V."/>
        </authorList>
    </citation>
    <scope>NUCLEOTIDE SEQUENCE [LARGE SCALE GENOMIC DNA]</scope>
    <source>
        <strain>ATCC 15692 / DSM 22644 / CIP 104116 / JCM 14847 / LMG 12228 / 1C / PRS 101 / PAO1</strain>
    </source>
</reference>
<protein>
    <recommendedName>
        <fullName evidence="1">5-methyltetrahydropteroyltriglutamate--homocysteine methyltransferase</fullName>
        <ecNumber evidence="1">2.1.1.14</ecNumber>
    </recommendedName>
    <alternativeName>
        <fullName evidence="1">Cobalamin-independent methionine synthase</fullName>
    </alternativeName>
    <alternativeName>
        <fullName evidence="1">Methionine synthase, vitamin-B12 independent isozyme</fullName>
    </alternativeName>
</protein>
<sequence length="766" mass="86211">MALAHTLGFPRIGRDRELKKAQEAFWKGELDEAGLRAVGRQLRAAHWQVQKDAGIQLLPVGDFAWYDQVLTHSLTFGVIPERFRAHGEAGPTLHTLFGMARGVSDDSCCGGAHAQEMTKWFDTNYHYLVPEFSADQQFQLSWEQLFEEVDEARALGHQVKPVLIGPLTYLWLGKAKGAEFDRLDLLDRLLPLYGQIFRRLAGQGVEWVQIDEPILVLDLPQAWKNAFERAYNLLQSEPLKKLVATYFGGLEDNLGLAANLPVDGLHIDLVRAPEQYPSILDRLPAYKVVSLGLVNGRNVWRCDLEKALEVVRHARERLGERLWVAPSCSLLHSPVDLEREDGLDAELKSWLAFAVQKCREVAVLARAATEPEAAEVLAALEESRAVQASRASSPRIHKPAVQARLAAIKASDAQRRSPFAERIARQRAGLDLPAFPTTTIGSFPQTSSIRLARQSFKQGKLSEAEYIEAMHSEIRHAVQIQEQLGLDVLVHGEAERNDMVEYFAEQLDGYVFTRFGWVQSYGSRCVKPAVIYGDLSRPRAMTVEWIRYAQSLTDKVMKGMLTGPVTMLMWSFPREDVSREVQARQLALAIRDEVVDLEAAGIRIVQIDEAAFREGLPLRRNAWPHYLEWATEAFRLCASGVRDETQIHTHMCYSEFNDVIESIAAMDADVITIETSRSDMELLEAFEQFDYPNEIGPGVYDIHSPRVPSREEIVALLRKAARRIPAERLWVNPDCGLKTRAWPETEAALVNMVAAARELRGDLARG</sequence>
<evidence type="ECO:0000255" key="1">
    <source>
        <dbReference type="HAMAP-Rule" id="MF_00172"/>
    </source>
</evidence>
<evidence type="ECO:0000305" key="2"/>
<feature type="chain" id="PRO_0000098649" description="5-methyltetrahydropteroyltriglutamate--homocysteine methyltransferase">
    <location>
        <begin position="1"/>
        <end position="766"/>
    </location>
</feature>
<feature type="active site" description="Proton donor" evidence="1">
    <location>
        <position position="703"/>
    </location>
</feature>
<feature type="binding site" evidence="1">
    <location>
        <begin position="16"/>
        <end position="19"/>
    </location>
    <ligand>
        <name>5-methyltetrahydropteroyltri-L-glutamate</name>
        <dbReference type="ChEBI" id="CHEBI:58207"/>
    </ligand>
</feature>
<feature type="binding site" evidence="1">
    <location>
        <position position="119"/>
    </location>
    <ligand>
        <name>5-methyltetrahydropteroyltri-L-glutamate</name>
        <dbReference type="ChEBI" id="CHEBI:58207"/>
    </ligand>
</feature>
<feature type="binding site" evidence="1">
    <location>
        <begin position="440"/>
        <end position="442"/>
    </location>
    <ligand>
        <name>L-homocysteine</name>
        <dbReference type="ChEBI" id="CHEBI:58199"/>
    </ligand>
</feature>
<feature type="binding site" evidence="1">
    <location>
        <begin position="440"/>
        <end position="442"/>
    </location>
    <ligand>
        <name>L-methionine</name>
        <dbReference type="ChEBI" id="CHEBI:57844"/>
    </ligand>
</feature>
<feature type="binding site" evidence="1">
    <location>
        <position position="493"/>
    </location>
    <ligand>
        <name>L-homocysteine</name>
        <dbReference type="ChEBI" id="CHEBI:58199"/>
    </ligand>
</feature>
<feature type="binding site" evidence="1">
    <location>
        <position position="493"/>
    </location>
    <ligand>
        <name>L-methionine</name>
        <dbReference type="ChEBI" id="CHEBI:57844"/>
    </ligand>
</feature>
<feature type="binding site" evidence="1">
    <location>
        <begin position="524"/>
        <end position="525"/>
    </location>
    <ligand>
        <name>5-methyltetrahydropteroyltri-L-glutamate</name>
        <dbReference type="ChEBI" id="CHEBI:58207"/>
    </ligand>
</feature>
<feature type="binding site" evidence="1">
    <location>
        <position position="570"/>
    </location>
    <ligand>
        <name>5-methyltetrahydropteroyltri-L-glutamate</name>
        <dbReference type="ChEBI" id="CHEBI:58207"/>
    </ligand>
</feature>
<feature type="binding site" evidence="1">
    <location>
        <position position="608"/>
    </location>
    <ligand>
        <name>L-homocysteine</name>
        <dbReference type="ChEBI" id="CHEBI:58199"/>
    </ligand>
</feature>
<feature type="binding site" evidence="1">
    <location>
        <position position="608"/>
    </location>
    <ligand>
        <name>L-methionine</name>
        <dbReference type="ChEBI" id="CHEBI:57844"/>
    </ligand>
</feature>
<feature type="binding site" evidence="1">
    <location>
        <position position="614"/>
    </location>
    <ligand>
        <name>5-methyltetrahydropteroyltri-L-glutamate</name>
        <dbReference type="ChEBI" id="CHEBI:58207"/>
    </ligand>
</feature>
<feature type="binding site" evidence="1">
    <location>
        <position position="650"/>
    </location>
    <ligand>
        <name>Zn(2+)</name>
        <dbReference type="ChEBI" id="CHEBI:29105"/>
        <note>catalytic</note>
    </ligand>
</feature>
<feature type="binding site" evidence="1">
    <location>
        <position position="652"/>
    </location>
    <ligand>
        <name>Zn(2+)</name>
        <dbReference type="ChEBI" id="CHEBI:29105"/>
        <note>catalytic</note>
    </ligand>
</feature>
<feature type="binding site" evidence="1">
    <location>
        <position position="674"/>
    </location>
    <ligand>
        <name>Zn(2+)</name>
        <dbReference type="ChEBI" id="CHEBI:29105"/>
        <note>catalytic</note>
    </ligand>
</feature>
<feature type="binding site" evidence="1">
    <location>
        <position position="735"/>
    </location>
    <ligand>
        <name>Zn(2+)</name>
        <dbReference type="ChEBI" id="CHEBI:29105"/>
        <note>catalytic</note>
    </ligand>
</feature>
<organism>
    <name type="scientific">Pseudomonas aeruginosa (strain ATCC 15692 / DSM 22644 / CIP 104116 / JCM 14847 / LMG 12228 / 1C / PRS 101 / PAO1)</name>
    <dbReference type="NCBI Taxonomy" id="208964"/>
    <lineage>
        <taxon>Bacteria</taxon>
        <taxon>Pseudomonadati</taxon>
        <taxon>Pseudomonadota</taxon>
        <taxon>Gammaproteobacteria</taxon>
        <taxon>Pseudomonadales</taxon>
        <taxon>Pseudomonadaceae</taxon>
        <taxon>Pseudomonas</taxon>
    </lineage>
</organism>
<name>METE_PSEAE</name>
<comment type="function">
    <text evidence="1">Catalyzes the transfer of a methyl group from 5-methyltetrahydrofolate to homocysteine resulting in methionine formation.</text>
</comment>
<comment type="catalytic activity">
    <reaction evidence="1">
        <text>5-methyltetrahydropteroyltri-L-glutamate + L-homocysteine = tetrahydropteroyltri-L-glutamate + L-methionine</text>
        <dbReference type="Rhea" id="RHEA:21196"/>
        <dbReference type="ChEBI" id="CHEBI:57844"/>
        <dbReference type="ChEBI" id="CHEBI:58140"/>
        <dbReference type="ChEBI" id="CHEBI:58199"/>
        <dbReference type="ChEBI" id="CHEBI:58207"/>
        <dbReference type="EC" id="2.1.1.14"/>
    </reaction>
</comment>
<comment type="cofactor">
    <cofactor evidence="1">
        <name>Zn(2+)</name>
        <dbReference type="ChEBI" id="CHEBI:29105"/>
    </cofactor>
    <text evidence="1">Binds 1 zinc ion per subunit.</text>
</comment>
<comment type="pathway">
    <text evidence="1">Amino-acid biosynthesis; L-methionine biosynthesis via de novo pathway; L-methionine from L-homocysteine (MetE route): step 1/1.</text>
</comment>
<comment type="similarity">
    <text evidence="1 2">Belongs to the vitamin-B12 independent methionine synthase family.</text>
</comment>
<gene>
    <name evidence="1" type="primary">metE</name>
    <name type="ordered locus">PA1927</name>
</gene>
<accession>P57703</accession>
<accession>Q9I2H7</accession>
<proteinExistence type="inferred from homology"/>
<dbReference type="EC" id="2.1.1.14" evidence="1"/>
<dbReference type="EMBL" id="AE004091">
    <property type="protein sequence ID" value="AAG05315.1"/>
    <property type="molecule type" value="Genomic_DNA"/>
</dbReference>
<dbReference type="PIR" id="D83404">
    <property type="entry name" value="D83404"/>
</dbReference>
<dbReference type="RefSeq" id="NP_250617.1">
    <property type="nucleotide sequence ID" value="NC_002516.2"/>
</dbReference>
<dbReference type="RefSeq" id="WP_003114925.1">
    <property type="nucleotide sequence ID" value="NZ_QZGE01000033.1"/>
</dbReference>
<dbReference type="SMR" id="P57703"/>
<dbReference type="FunCoup" id="P57703">
    <property type="interactions" value="465"/>
</dbReference>
<dbReference type="STRING" id="208964.PA1927"/>
<dbReference type="PaxDb" id="208964-PA1927"/>
<dbReference type="GeneID" id="877662"/>
<dbReference type="KEGG" id="pae:PA1927"/>
<dbReference type="PATRIC" id="fig|208964.12.peg.2008"/>
<dbReference type="PseudoCAP" id="PA1927"/>
<dbReference type="HOGENOM" id="CLU_013175_0_0_6"/>
<dbReference type="InParanoid" id="P57703"/>
<dbReference type="OrthoDB" id="244285at2"/>
<dbReference type="PhylomeDB" id="P57703"/>
<dbReference type="BioCyc" id="PAER208964:G1FZ6-1967-MONOMER"/>
<dbReference type="UniPathway" id="UPA00051">
    <property type="reaction ID" value="UER00082"/>
</dbReference>
<dbReference type="Proteomes" id="UP000002438">
    <property type="component" value="Chromosome"/>
</dbReference>
<dbReference type="GO" id="GO:0003871">
    <property type="term" value="F:5-methyltetrahydropteroyltriglutamate-homocysteine S-methyltransferase activity"/>
    <property type="evidence" value="ECO:0007669"/>
    <property type="project" value="UniProtKB-UniRule"/>
</dbReference>
<dbReference type="GO" id="GO:0008270">
    <property type="term" value="F:zinc ion binding"/>
    <property type="evidence" value="ECO:0007669"/>
    <property type="project" value="InterPro"/>
</dbReference>
<dbReference type="GO" id="GO:0009086">
    <property type="term" value="P:methionine biosynthetic process"/>
    <property type="evidence" value="ECO:0007669"/>
    <property type="project" value="UniProtKB-UniRule"/>
</dbReference>
<dbReference type="GO" id="GO:0032259">
    <property type="term" value="P:methylation"/>
    <property type="evidence" value="ECO:0007669"/>
    <property type="project" value="UniProtKB-KW"/>
</dbReference>
<dbReference type="CDD" id="cd03311">
    <property type="entry name" value="CIMS_C_terminal_like"/>
    <property type="match status" value="1"/>
</dbReference>
<dbReference type="CDD" id="cd03312">
    <property type="entry name" value="CIMS_N_terminal_like"/>
    <property type="match status" value="1"/>
</dbReference>
<dbReference type="FunFam" id="3.20.20.210:FF:000002">
    <property type="entry name" value="5-methyltetrahydropteroyltriglutamate--homocysteine methyltransferase"/>
    <property type="match status" value="1"/>
</dbReference>
<dbReference type="FunFam" id="3.20.20.210:FF:000003">
    <property type="entry name" value="5-methyltetrahydropteroyltriglutamate--homocysteine methyltransferase"/>
    <property type="match status" value="1"/>
</dbReference>
<dbReference type="Gene3D" id="3.20.20.210">
    <property type="match status" value="2"/>
</dbReference>
<dbReference type="HAMAP" id="MF_00172">
    <property type="entry name" value="Meth_synth"/>
    <property type="match status" value="1"/>
</dbReference>
<dbReference type="InterPro" id="IPR013215">
    <property type="entry name" value="Cbl-indep_Met_Synth_N"/>
</dbReference>
<dbReference type="InterPro" id="IPR006276">
    <property type="entry name" value="Cobalamin-indep_Met_synthase"/>
</dbReference>
<dbReference type="InterPro" id="IPR002629">
    <property type="entry name" value="Met_Synth_C/arc"/>
</dbReference>
<dbReference type="InterPro" id="IPR038071">
    <property type="entry name" value="UROD/MetE-like_sf"/>
</dbReference>
<dbReference type="NCBIfam" id="TIGR01371">
    <property type="entry name" value="met_syn_B12ind"/>
    <property type="match status" value="1"/>
</dbReference>
<dbReference type="NCBIfam" id="NF003556">
    <property type="entry name" value="PRK05222.1"/>
    <property type="match status" value="1"/>
</dbReference>
<dbReference type="PANTHER" id="PTHR30519">
    <property type="entry name" value="5-METHYLTETRAHYDROPTEROYLTRIGLUTAMATE--HOMOCYSTEINE METHYLTRANSFERASE"/>
    <property type="match status" value="1"/>
</dbReference>
<dbReference type="Pfam" id="PF08267">
    <property type="entry name" value="Meth_synt_1"/>
    <property type="match status" value="1"/>
</dbReference>
<dbReference type="Pfam" id="PF01717">
    <property type="entry name" value="Meth_synt_2"/>
    <property type="match status" value="1"/>
</dbReference>
<dbReference type="PIRSF" id="PIRSF000382">
    <property type="entry name" value="MeTrfase_B12_ind"/>
    <property type="match status" value="1"/>
</dbReference>
<dbReference type="SUPFAM" id="SSF51726">
    <property type="entry name" value="UROD/MetE-like"/>
    <property type="match status" value="2"/>
</dbReference>
<keyword id="KW-0028">Amino-acid biosynthesis</keyword>
<keyword id="KW-0479">Metal-binding</keyword>
<keyword id="KW-0486">Methionine biosynthesis</keyword>
<keyword id="KW-0489">Methyltransferase</keyword>
<keyword id="KW-1185">Reference proteome</keyword>
<keyword id="KW-0677">Repeat</keyword>
<keyword id="KW-0808">Transferase</keyword>
<keyword id="KW-0862">Zinc</keyword>